<keyword id="KW-0687">Ribonucleoprotein</keyword>
<keyword id="KW-0689">Ribosomal protein</keyword>
<keyword id="KW-0694">RNA-binding</keyword>
<keyword id="KW-0699">rRNA-binding</keyword>
<protein>
    <recommendedName>
        <fullName evidence="1">Small ribosomal subunit protein uS8</fullName>
    </recommendedName>
    <alternativeName>
        <fullName evidence="2">30S ribosomal protein S8</fullName>
    </alternativeName>
</protein>
<evidence type="ECO:0000255" key="1">
    <source>
        <dbReference type="HAMAP-Rule" id="MF_01302"/>
    </source>
</evidence>
<evidence type="ECO:0000305" key="2"/>
<name>RS8_ALTMD</name>
<reference key="1">
    <citation type="journal article" date="2008" name="ISME J.">
        <title>Comparative genomics of two ecotypes of the marine planktonic copiotroph Alteromonas macleodii suggests alternative lifestyles associated with different kinds of particulate organic matter.</title>
        <authorList>
            <person name="Ivars-Martinez E."/>
            <person name="Martin-Cuadrado A.-B."/>
            <person name="D'Auria G."/>
            <person name="Mira A."/>
            <person name="Ferriera S."/>
            <person name="Johnson J."/>
            <person name="Friedman R."/>
            <person name="Rodriguez-Valera F."/>
        </authorList>
    </citation>
    <scope>NUCLEOTIDE SEQUENCE [LARGE SCALE GENOMIC DNA]</scope>
    <source>
        <strain>DSM 17117 / CIP 110805 / LMG 28347 / Deep ecotype</strain>
    </source>
</reference>
<sequence length="130" mass="14100">MSMQDPIADMFTRIRNGQMAQKVSVTMPSSKLRVAICEVLKAEGYITDFAASGDVKPVLEVTLKYFEGKQVIDTIERVSRPGLRIYKKKDELPKVMGGLGVAIVSTSKGVMTDRAARNAGMGGEIIGYVA</sequence>
<gene>
    <name evidence="1" type="primary">rpsH</name>
    <name type="ordered locus">MADE_1013990</name>
</gene>
<feature type="chain" id="PRO_1000140504" description="Small ribosomal subunit protein uS8">
    <location>
        <begin position="1"/>
        <end position="130"/>
    </location>
</feature>
<proteinExistence type="inferred from homology"/>
<dbReference type="EMBL" id="CP001103">
    <property type="protein sequence ID" value="AEA98932.1"/>
    <property type="molecule type" value="Genomic_DNA"/>
</dbReference>
<dbReference type="RefSeq" id="WP_012519224.1">
    <property type="nucleotide sequence ID" value="NC_011138.3"/>
</dbReference>
<dbReference type="SMR" id="B4RT42"/>
<dbReference type="GeneID" id="56343832"/>
<dbReference type="KEGG" id="amc:MADE_1013990"/>
<dbReference type="HOGENOM" id="CLU_098428_0_0_6"/>
<dbReference type="Proteomes" id="UP000001870">
    <property type="component" value="Chromosome"/>
</dbReference>
<dbReference type="GO" id="GO:1990904">
    <property type="term" value="C:ribonucleoprotein complex"/>
    <property type="evidence" value="ECO:0007669"/>
    <property type="project" value="UniProtKB-KW"/>
</dbReference>
<dbReference type="GO" id="GO:0005840">
    <property type="term" value="C:ribosome"/>
    <property type="evidence" value="ECO:0007669"/>
    <property type="project" value="UniProtKB-KW"/>
</dbReference>
<dbReference type="GO" id="GO:0019843">
    <property type="term" value="F:rRNA binding"/>
    <property type="evidence" value="ECO:0007669"/>
    <property type="project" value="UniProtKB-UniRule"/>
</dbReference>
<dbReference type="GO" id="GO:0003735">
    <property type="term" value="F:structural constituent of ribosome"/>
    <property type="evidence" value="ECO:0007669"/>
    <property type="project" value="InterPro"/>
</dbReference>
<dbReference type="GO" id="GO:0006412">
    <property type="term" value="P:translation"/>
    <property type="evidence" value="ECO:0007669"/>
    <property type="project" value="UniProtKB-UniRule"/>
</dbReference>
<dbReference type="FunFam" id="3.30.1370.30:FF:000003">
    <property type="entry name" value="30S ribosomal protein S8"/>
    <property type="match status" value="1"/>
</dbReference>
<dbReference type="FunFam" id="3.30.1490.10:FF:000001">
    <property type="entry name" value="30S ribosomal protein S8"/>
    <property type="match status" value="1"/>
</dbReference>
<dbReference type="Gene3D" id="3.30.1370.30">
    <property type="match status" value="1"/>
</dbReference>
<dbReference type="Gene3D" id="3.30.1490.10">
    <property type="match status" value="1"/>
</dbReference>
<dbReference type="HAMAP" id="MF_01302_B">
    <property type="entry name" value="Ribosomal_uS8_B"/>
    <property type="match status" value="1"/>
</dbReference>
<dbReference type="InterPro" id="IPR000630">
    <property type="entry name" value="Ribosomal_uS8"/>
</dbReference>
<dbReference type="InterPro" id="IPR047863">
    <property type="entry name" value="Ribosomal_uS8_CS"/>
</dbReference>
<dbReference type="InterPro" id="IPR035987">
    <property type="entry name" value="Ribosomal_uS8_sf"/>
</dbReference>
<dbReference type="NCBIfam" id="NF001109">
    <property type="entry name" value="PRK00136.1"/>
    <property type="match status" value="1"/>
</dbReference>
<dbReference type="PANTHER" id="PTHR11758">
    <property type="entry name" value="40S RIBOSOMAL PROTEIN S15A"/>
    <property type="match status" value="1"/>
</dbReference>
<dbReference type="Pfam" id="PF00410">
    <property type="entry name" value="Ribosomal_S8"/>
    <property type="match status" value="1"/>
</dbReference>
<dbReference type="SUPFAM" id="SSF56047">
    <property type="entry name" value="Ribosomal protein S8"/>
    <property type="match status" value="1"/>
</dbReference>
<dbReference type="PROSITE" id="PS00053">
    <property type="entry name" value="RIBOSOMAL_S8"/>
    <property type="match status" value="1"/>
</dbReference>
<organism>
    <name type="scientific">Alteromonas mediterranea (strain DSM 17117 / CIP 110805 / LMG 28347 / Deep ecotype)</name>
    <dbReference type="NCBI Taxonomy" id="1774373"/>
    <lineage>
        <taxon>Bacteria</taxon>
        <taxon>Pseudomonadati</taxon>
        <taxon>Pseudomonadota</taxon>
        <taxon>Gammaproteobacteria</taxon>
        <taxon>Alteromonadales</taxon>
        <taxon>Alteromonadaceae</taxon>
        <taxon>Alteromonas/Salinimonas group</taxon>
        <taxon>Alteromonas</taxon>
    </lineage>
</organism>
<accession>B4RT42</accession>
<accession>F2GAJ8</accession>
<comment type="function">
    <text evidence="1">One of the primary rRNA binding proteins, it binds directly to 16S rRNA central domain where it helps coordinate assembly of the platform of the 30S subunit.</text>
</comment>
<comment type="subunit">
    <text evidence="1">Part of the 30S ribosomal subunit. Contacts proteins S5 and S12.</text>
</comment>
<comment type="similarity">
    <text evidence="1">Belongs to the universal ribosomal protein uS8 family.</text>
</comment>